<comment type="catalytic activity">
    <reaction>
        <text>L-seryl-[protein] + ATP = O-phospho-L-seryl-[protein] + ADP + H(+)</text>
        <dbReference type="Rhea" id="RHEA:17989"/>
        <dbReference type="Rhea" id="RHEA-COMP:9863"/>
        <dbReference type="Rhea" id="RHEA-COMP:11604"/>
        <dbReference type="ChEBI" id="CHEBI:15378"/>
        <dbReference type="ChEBI" id="CHEBI:29999"/>
        <dbReference type="ChEBI" id="CHEBI:30616"/>
        <dbReference type="ChEBI" id="CHEBI:83421"/>
        <dbReference type="ChEBI" id="CHEBI:456216"/>
        <dbReference type="EC" id="2.7.11.1"/>
    </reaction>
</comment>
<comment type="catalytic activity">
    <reaction>
        <text>L-threonyl-[protein] + ATP = O-phospho-L-threonyl-[protein] + ADP + H(+)</text>
        <dbReference type="Rhea" id="RHEA:46608"/>
        <dbReference type="Rhea" id="RHEA-COMP:11060"/>
        <dbReference type="Rhea" id="RHEA-COMP:11605"/>
        <dbReference type="ChEBI" id="CHEBI:15378"/>
        <dbReference type="ChEBI" id="CHEBI:30013"/>
        <dbReference type="ChEBI" id="CHEBI:30616"/>
        <dbReference type="ChEBI" id="CHEBI:61977"/>
        <dbReference type="ChEBI" id="CHEBI:456216"/>
        <dbReference type="EC" id="2.7.11.1"/>
    </reaction>
</comment>
<comment type="subcellular location">
    <subcellularLocation>
        <location evidence="6">Cell membrane</location>
        <topology evidence="9">Single-pass type I membrane protein</topology>
    </subcellularLocation>
</comment>
<comment type="similarity">
    <text evidence="3">Belongs to the protein kinase superfamily. Ser/Thr protein kinase family.</text>
</comment>
<comment type="sequence caution" evidence="9">
    <conflict type="erroneous gene model prediction">
        <sequence resource="EMBL-CDS" id="BAB11288"/>
    </conflict>
</comment>
<protein>
    <recommendedName>
        <fullName evidence="7">LEAF RUST 10 DISEASE-RESISTANCE LOCUS RECEPTOR-LIKE PROTEIN KINASE-like 1.3</fullName>
        <ecNumber>2.7.11.1</ecNumber>
    </recommendedName>
    <alternativeName>
        <fullName evidence="9">Probable receptor-like serine/threonine-protein kinase LRK10L-1.3</fullName>
    </alternativeName>
</protein>
<proteinExistence type="evidence at transcript level"/>
<accession>Q8VYG0</accession>
<accession>Q9FF35</accession>
<keyword id="KW-0067">ATP-binding</keyword>
<keyword id="KW-1003">Cell membrane</keyword>
<keyword id="KW-0325">Glycoprotein</keyword>
<keyword id="KW-0418">Kinase</keyword>
<keyword id="KW-0472">Membrane</keyword>
<keyword id="KW-0547">Nucleotide-binding</keyword>
<keyword id="KW-0597">Phosphoprotein</keyword>
<keyword id="KW-0675">Receptor</keyword>
<keyword id="KW-1185">Reference proteome</keyword>
<keyword id="KW-0723">Serine/threonine-protein kinase</keyword>
<keyword id="KW-0732">Signal</keyword>
<keyword id="KW-0808">Transferase</keyword>
<keyword id="KW-0812">Transmembrane</keyword>
<keyword id="KW-1133">Transmembrane helix</keyword>
<evidence type="ECO:0000250" key="1">
    <source>
        <dbReference type="UniProtKB" id="O48814"/>
    </source>
</evidence>
<evidence type="ECO:0000255" key="2"/>
<evidence type="ECO:0000255" key="3">
    <source>
        <dbReference type="PROSITE-ProRule" id="PRU00159"/>
    </source>
</evidence>
<evidence type="ECO:0000255" key="4">
    <source>
        <dbReference type="PROSITE-ProRule" id="PRU00498"/>
    </source>
</evidence>
<evidence type="ECO:0000256" key="5">
    <source>
        <dbReference type="SAM" id="MobiDB-lite"/>
    </source>
</evidence>
<evidence type="ECO:0000269" key="6">
    <source>
    </source>
</evidence>
<evidence type="ECO:0000303" key="7">
    <source>
    </source>
</evidence>
<evidence type="ECO:0000303" key="8">
    <source>
    </source>
</evidence>
<evidence type="ECO:0000305" key="9"/>
<evidence type="ECO:0000312" key="10">
    <source>
        <dbReference type="Araport" id="AT5G38210"/>
    </source>
</evidence>
<evidence type="ECO:0000312" key="11">
    <source>
        <dbReference type="EMBL" id="BAB11288.1"/>
    </source>
</evidence>
<feature type="signal peptide" evidence="2">
    <location>
        <begin position="1"/>
        <end position="33"/>
    </location>
</feature>
<feature type="chain" id="PRO_5005941403" description="LEAF RUST 10 DISEASE-RESISTANCE LOCUS RECEPTOR-LIKE PROTEIN KINASE-like 1.3">
    <location>
        <begin position="34"/>
        <end position="686"/>
    </location>
</feature>
<feature type="topological domain" description="Extracellular" evidence="9">
    <location>
        <begin position="34"/>
        <end position="264"/>
    </location>
</feature>
<feature type="transmembrane region" description="Helical" evidence="2">
    <location>
        <begin position="265"/>
        <end position="285"/>
    </location>
</feature>
<feature type="topological domain" description="Cytoplasmic" evidence="9">
    <location>
        <begin position="286"/>
        <end position="686"/>
    </location>
</feature>
<feature type="domain" description="Protein kinase" evidence="3">
    <location>
        <begin position="358"/>
        <end position="633"/>
    </location>
</feature>
<feature type="region of interest" description="Disordered" evidence="5">
    <location>
        <begin position="657"/>
        <end position="686"/>
    </location>
</feature>
<feature type="compositionally biased region" description="Low complexity" evidence="5">
    <location>
        <begin position="674"/>
        <end position="686"/>
    </location>
</feature>
<feature type="active site" description="Proton acceptor" evidence="3">
    <location>
        <position position="482"/>
    </location>
</feature>
<feature type="binding site" evidence="3">
    <location>
        <begin position="364"/>
        <end position="372"/>
    </location>
    <ligand>
        <name>ATP</name>
        <dbReference type="ChEBI" id="CHEBI:30616"/>
    </ligand>
</feature>
<feature type="binding site" evidence="3">
    <location>
        <position position="386"/>
    </location>
    <ligand>
        <name>ATP</name>
        <dbReference type="ChEBI" id="CHEBI:30616"/>
    </ligand>
</feature>
<feature type="modified residue" description="Phosphotyrosine" evidence="1">
    <location>
        <position position="432"/>
    </location>
</feature>
<feature type="modified residue" description="Phosphoserine" evidence="1">
    <location>
        <position position="515"/>
    </location>
</feature>
<feature type="modified residue" description="Phosphothreonine" evidence="1">
    <location>
        <position position="516"/>
    </location>
</feature>
<feature type="modified residue" description="Phosphothreonine" evidence="1">
    <location>
        <position position="521"/>
    </location>
</feature>
<feature type="modified residue" description="Phosphotyrosine" evidence="1">
    <location>
        <position position="529"/>
    </location>
</feature>
<feature type="glycosylation site" description="N-linked (GlcNAc...) asparagine" evidence="4">
    <location>
        <position position="76"/>
    </location>
</feature>
<feature type="glycosylation site" description="N-linked (GlcNAc...) asparagine" evidence="4">
    <location>
        <position position="93"/>
    </location>
</feature>
<feature type="glycosylation site" description="N-linked (GlcNAc...) asparagine" evidence="4">
    <location>
        <position position="175"/>
    </location>
</feature>
<feature type="glycosylation site" description="N-linked (GlcNAc...) asparagine" evidence="4">
    <location>
        <position position="190"/>
    </location>
</feature>
<feature type="glycosylation site" description="N-linked (GlcNAc...) asparagine" evidence="4">
    <location>
        <position position="236"/>
    </location>
</feature>
<reference key="1">
    <citation type="journal article" date="1997" name="DNA Res.">
        <title>Structural analysis of Arabidopsis thaliana chromosome 5. I. Sequence features of the 1.6 Mb regions covered by twenty physically assigned P1 clones.</title>
        <authorList>
            <person name="Sato S."/>
            <person name="Kotani H."/>
            <person name="Nakamura Y."/>
            <person name="Kaneko T."/>
            <person name="Asamizu E."/>
            <person name="Fukami M."/>
            <person name="Miyajima N."/>
            <person name="Tabata S."/>
        </authorList>
    </citation>
    <scope>NUCLEOTIDE SEQUENCE [LARGE SCALE GENOMIC DNA]</scope>
    <source>
        <strain>cv. Columbia</strain>
    </source>
</reference>
<reference key="2">
    <citation type="journal article" date="2017" name="Plant J.">
        <title>Araport11: a complete reannotation of the Arabidopsis thaliana reference genome.</title>
        <authorList>
            <person name="Cheng C.Y."/>
            <person name="Krishnakumar V."/>
            <person name="Chan A.P."/>
            <person name="Thibaud-Nissen F."/>
            <person name="Schobel S."/>
            <person name="Town C.D."/>
        </authorList>
    </citation>
    <scope>GENOME REANNOTATION</scope>
    <source>
        <strain>cv. Columbia</strain>
    </source>
</reference>
<reference key="3">
    <citation type="journal article" date="2003" name="Science">
        <title>Empirical analysis of transcriptional activity in the Arabidopsis genome.</title>
        <authorList>
            <person name="Yamada K."/>
            <person name="Lim J."/>
            <person name="Dale J.M."/>
            <person name="Chen H."/>
            <person name="Shinn P."/>
            <person name="Palm C.J."/>
            <person name="Southwick A.M."/>
            <person name="Wu H.C."/>
            <person name="Kim C.J."/>
            <person name="Nguyen M."/>
            <person name="Pham P.K."/>
            <person name="Cheuk R.F."/>
            <person name="Karlin-Newmann G."/>
            <person name="Liu S.X."/>
            <person name="Lam B."/>
            <person name="Sakano H."/>
            <person name="Wu T."/>
            <person name="Yu G."/>
            <person name="Miranda M."/>
            <person name="Quach H.L."/>
            <person name="Tripp M."/>
            <person name="Chang C.H."/>
            <person name="Lee J.M."/>
            <person name="Toriumi M.J."/>
            <person name="Chan M.M."/>
            <person name="Tang C.C."/>
            <person name="Onodera C.S."/>
            <person name="Deng J.M."/>
            <person name="Akiyama K."/>
            <person name="Ansari Y."/>
            <person name="Arakawa T."/>
            <person name="Banh J."/>
            <person name="Banno F."/>
            <person name="Bowser L."/>
            <person name="Brooks S.Y."/>
            <person name="Carninci P."/>
            <person name="Chao Q."/>
            <person name="Choy N."/>
            <person name="Enju A."/>
            <person name="Goldsmith A.D."/>
            <person name="Gurjal M."/>
            <person name="Hansen N.F."/>
            <person name="Hayashizaki Y."/>
            <person name="Johnson-Hopson C."/>
            <person name="Hsuan V.W."/>
            <person name="Iida K."/>
            <person name="Karnes M."/>
            <person name="Khan S."/>
            <person name="Koesema E."/>
            <person name="Ishida J."/>
            <person name="Jiang P.X."/>
            <person name="Jones T."/>
            <person name="Kawai J."/>
            <person name="Kamiya A."/>
            <person name="Meyers C."/>
            <person name="Nakajima M."/>
            <person name="Narusaka M."/>
            <person name="Seki M."/>
            <person name="Sakurai T."/>
            <person name="Satou M."/>
            <person name="Tamse R."/>
            <person name="Vaysberg M."/>
            <person name="Wallender E.K."/>
            <person name="Wong C."/>
            <person name="Yamamura Y."/>
            <person name="Yuan S."/>
            <person name="Shinozaki K."/>
            <person name="Davis R.W."/>
            <person name="Theologis A."/>
            <person name="Ecker J.R."/>
        </authorList>
    </citation>
    <scope>NUCLEOTIDE SEQUENCE [LARGE SCALE MRNA]</scope>
    <source>
        <strain>cv. Columbia</strain>
    </source>
</reference>
<reference key="4">
    <citation type="journal article" date="2001" name="Proc. Natl. Acad. Sci. U.S.A.">
        <title>Receptor-like kinases from Arabidopsis form a monophyletic gene family related to animal receptor kinases.</title>
        <authorList>
            <person name="Shiu S.H."/>
            <person name="Bleecker A.B."/>
        </authorList>
    </citation>
    <scope>GENE FAMILY</scope>
</reference>
<reference key="5">
    <citation type="journal article" date="2003" name="Plant Physiol.">
        <title>Expansion of the receptor-like kinase/Pelle gene family and receptor-like proteins in Arabidopsis.</title>
        <authorList>
            <person name="Shiu S.H."/>
            <person name="Bleecker A.B."/>
        </authorList>
    </citation>
    <scope>GENE FAMILY</scope>
</reference>
<reference key="6">
    <citation type="journal article" date="2015" name="Plant Cell Rep.">
        <title>Alternative splicing of mini-exons in the Arabidopsis leaf rust receptor-like kinase LRK10 genes affects subcellular localisation.</title>
        <authorList>
            <person name="Shin K.H."/>
            <person name="Yang S.H."/>
            <person name="Lee J.Y."/>
            <person name="Lim C.W."/>
            <person name="Lee S.C."/>
            <person name="Brown J.W."/>
            <person name="Kim S.H."/>
        </authorList>
    </citation>
    <scope>SUBCELLULAR LOCATION</scope>
</reference>
<gene>
    <name evidence="7" type="primary">LRK10L-1.3</name>
    <name evidence="8" type="synonym">LRK10L3</name>
    <name evidence="10" type="ordered locus">At5g38210</name>
    <name evidence="11" type="ORF">MXA21.10</name>
</gene>
<dbReference type="EC" id="2.7.11.1"/>
<dbReference type="EMBL" id="AB005247">
    <property type="protein sequence ID" value="BAB11288.1"/>
    <property type="status" value="ALT_SEQ"/>
    <property type="molecule type" value="Genomic_DNA"/>
</dbReference>
<dbReference type="EMBL" id="CP002688">
    <property type="protein sequence ID" value="AED94281.1"/>
    <property type="molecule type" value="Genomic_DNA"/>
</dbReference>
<dbReference type="EMBL" id="AY072106">
    <property type="protein sequence ID" value="AAL59928.1"/>
    <property type="molecule type" value="mRNA"/>
</dbReference>
<dbReference type="EMBL" id="AY133861">
    <property type="protein sequence ID" value="AAM91795.1"/>
    <property type="molecule type" value="mRNA"/>
</dbReference>
<dbReference type="RefSeq" id="NP_198637.2">
    <property type="nucleotide sequence ID" value="NM_123182.4"/>
</dbReference>
<dbReference type="SMR" id="Q8VYG0"/>
<dbReference type="FunCoup" id="Q8VYG0">
    <property type="interactions" value="3"/>
</dbReference>
<dbReference type="IntAct" id="Q8VYG0">
    <property type="interactions" value="3"/>
</dbReference>
<dbReference type="STRING" id="3702.Q8VYG0"/>
<dbReference type="GlyCosmos" id="Q8VYG0">
    <property type="glycosylation" value="5 sites, No reported glycans"/>
</dbReference>
<dbReference type="GlyGen" id="Q8VYG0">
    <property type="glycosylation" value="6 sites"/>
</dbReference>
<dbReference type="iPTMnet" id="Q8VYG0"/>
<dbReference type="PaxDb" id="3702-AT5G38210.1"/>
<dbReference type="ProteomicsDB" id="238528"/>
<dbReference type="EnsemblPlants" id="AT5G38210.1">
    <property type="protein sequence ID" value="AT5G38210.1"/>
    <property type="gene ID" value="AT5G38210"/>
</dbReference>
<dbReference type="GeneID" id="833803"/>
<dbReference type="Gramene" id="AT5G38210.1">
    <property type="protein sequence ID" value="AT5G38210.1"/>
    <property type="gene ID" value="AT5G38210"/>
</dbReference>
<dbReference type="KEGG" id="ath:AT5G38210"/>
<dbReference type="Araport" id="AT5G38210"/>
<dbReference type="TAIR" id="AT5G38210">
    <property type="gene designation" value="LRK10L3"/>
</dbReference>
<dbReference type="eggNOG" id="KOG1187">
    <property type="taxonomic scope" value="Eukaryota"/>
</dbReference>
<dbReference type="HOGENOM" id="CLU_000288_115_3_1"/>
<dbReference type="InParanoid" id="Q8VYG0"/>
<dbReference type="PhylomeDB" id="Q8VYG0"/>
<dbReference type="PRO" id="PR:Q8VYG0"/>
<dbReference type="Proteomes" id="UP000006548">
    <property type="component" value="Chromosome 5"/>
</dbReference>
<dbReference type="ExpressionAtlas" id="Q8VYG0">
    <property type="expression patterns" value="baseline and differential"/>
</dbReference>
<dbReference type="GO" id="GO:0005886">
    <property type="term" value="C:plasma membrane"/>
    <property type="evidence" value="ECO:0000314"/>
    <property type="project" value="UniProtKB"/>
</dbReference>
<dbReference type="GO" id="GO:0005524">
    <property type="term" value="F:ATP binding"/>
    <property type="evidence" value="ECO:0007669"/>
    <property type="project" value="UniProtKB-KW"/>
</dbReference>
<dbReference type="GO" id="GO:0030247">
    <property type="term" value="F:polysaccharide binding"/>
    <property type="evidence" value="ECO:0007669"/>
    <property type="project" value="InterPro"/>
</dbReference>
<dbReference type="GO" id="GO:0106310">
    <property type="term" value="F:protein serine kinase activity"/>
    <property type="evidence" value="ECO:0007669"/>
    <property type="project" value="RHEA"/>
</dbReference>
<dbReference type="GO" id="GO:0004674">
    <property type="term" value="F:protein serine/threonine kinase activity"/>
    <property type="evidence" value="ECO:0007005"/>
    <property type="project" value="TAIR"/>
</dbReference>
<dbReference type="GO" id="GO:0046777">
    <property type="term" value="P:protein autophosphorylation"/>
    <property type="evidence" value="ECO:0007005"/>
    <property type="project" value="TAIR"/>
</dbReference>
<dbReference type="FunFam" id="1.10.510.10:FF:000161">
    <property type="entry name" value="Wall-associated receptor kinase-like 20"/>
    <property type="match status" value="1"/>
</dbReference>
<dbReference type="Gene3D" id="3.30.200.20">
    <property type="entry name" value="Phosphorylase Kinase, domain 1"/>
    <property type="match status" value="1"/>
</dbReference>
<dbReference type="Gene3D" id="1.10.510.10">
    <property type="entry name" value="Transferase(Phosphotransferase) domain 1"/>
    <property type="match status" value="1"/>
</dbReference>
<dbReference type="InterPro" id="IPR011009">
    <property type="entry name" value="Kinase-like_dom_sf"/>
</dbReference>
<dbReference type="InterPro" id="IPR000719">
    <property type="entry name" value="Prot_kinase_dom"/>
</dbReference>
<dbReference type="InterPro" id="IPR017441">
    <property type="entry name" value="Protein_kinase_ATP_BS"/>
</dbReference>
<dbReference type="InterPro" id="IPR001245">
    <property type="entry name" value="Ser-Thr/Tyr_kinase_cat_dom"/>
</dbReference>
<dbReference type="InterPro" id="IPR008271">
    <property type="entry name" value="Ser/Thr_kinase_AS"/>
</dbReference>
<dbReference type="InterPro" id="IPR032872">
    <property type="entry name" value="WAK_assoc_C"/>
</dbReference>
<dbReference type="InterPro" id="IPR025287">
    <property type="entry name" value="WAK_GUB"/>
</dbReference>
<dbReference type="PANTHER" id="PTHR46008:SF16">
    <property type="entry name" value="LEAF RUST 10 DISEASE-RESISTANCE LOCUS RECEPTOR-LIKE PROTEIN KINASE-LIKE 1.3"/>
    <property type="match status" value="1"/>
</dbReference>
<dbReference type="PANTHER" id="PTHR46008">
    <property type="entry name" value="LEAF RUST 10 DISEASE-RESISTANCE LOCUS RECEPTOR-LIKE PROTEIN KINASE-LIKE 1.4"/>
    <property type="match status" value="1"/>
</dbReference>
<dbReference type="Pfam" id="PF13947">
    <property type="entry name" value="GUB_WAK_bind"/>
    <property type="match status" value="1"/>
</dbReference>
<dbReference type="Pfam" id="PF07714">
    <property type="entry name" value="PK_Tyr_Ser-Thr"/>
    <property type="match status" value="1"/>
</dbReference>
<dbReference type="Pfam" id="PF14380">
    <property type="entry name" value="WAK_assoc"/>
    <property type="match status" value="1"/>
</dbReference>
<dbReference type="SMART" id="SM00220">
    <property type="entry name" value="S_TKc"/>
    <property type="match status" value="1"/>
</dbReference>
<dbReference type="SUPFAM" id="SSF56112">
    <property type="entry name" value="Protein kinase-like (PK-like)"/>
    <property type="match status" value="1"/>
</dbReference>
<dbReference type="PROSITE" id="PS00107">
    <property type="entry name" value="PROTEIN_KINASE_ATP"/>
    <property type="match status" value="1"/>
</dbReference>
<dbReference type="PROSITE" id="PS50011">
    <property type="entry name" value="PROTEIN_KINASE_DOM"/>
    <property type="match status" value="1"/>
</dbReference>
<dbReference type="PROSITE" id="PS00108">
    <property type="entry name" value="PROTEIN_KINASE_ST"/>
    <property type="match status" value="1"/>
</dbReference>
<name>LRL13_ARATH</name>
<organism>
    <name type="scientific">Arabidopsis thaliana</name>
    <name type="common">Mouse-ear cress</name>
    <dbReference type="NCBI Taxonomy" id="3702"/>
    <lineage>
        <taxon>Eukaryota</taxon>
        <taxon>Viridiplantae</taxon>
        <taxon>Streptophyta</taxon>
        <taxon>Embryophyta</taxon>
        <taxon>Tracheophyta</taxon>
        <taxon>Spermatophyta</taxon>
        <taxon>Magnoliopsida</taxon>
        <taxon>eudicotyledons</taxon>
        <taxon>Gunneridae</taxon>
        <taxon>Pentapetalae</taxon>
        <taxon>rosids</taxon>
        <taxon>malvids</taxon>
        <taxon>Brassicales</taxon>
        <taxon>Brassicaceae</taxon>
        <taxon>Camelineae</taxon>
        <taxon>Arabidopsis</taxon>
    </lineage>
</organism>
<sequence length="686" mass="75294">MFSPVLFRFSKPNSFLVLLFFLSYIHFLPCAQSQREPCDTLFRCGDLTAGFPFWGVARPQPCGHPSLGLHCQKQTNSTSLIISSLMYRVLEVNTTTSTLKLVRQDFSGPFCSASFSGATLTPELFELLPDYKTLSAYYLCNPSLHYPAKFICPNKGVGSIHQDDLYHNHCGGIFNITVPIGYAPEEGALNVTNLESVLKKGFEVKLSIDERPCQECKTNGGICAYHVATPVCCKTNSSSEVNCTPMMPSGSSAHAGLSKKGKIGIGFASGFLGATLIGGCLLCIFIRRRKKLATQYTNKGLSTTTPYSSNYTMSNTPTSTTISGSNHSLVPSISNLGNGSVYSGIQVFSYEELEEATENFSKELGDGGFGTVYYGTLKDGRAVAVKRLFERSLKRVEQFKNEIDILKSLKHPNLVILYGCTTRHSRELLLVYEYISNGTLAEHLHGNQAQSRPICWPARLQIAIETASALSYLHASGIIHRDVKTTNILLDSNYQVKVADFGLSRLFPMDQTHISTAPQGTPGYVDPEYYQCYRLNEKSDVYSFGVVLSELISSKEAVDITRHRHDINLANMAISKIQNDAVHELADLSLGFARDPSVKKMMSSVAELAFRCLQQERDVRPSMDEIVEVLRVIQKDGISDSKDVVVEIDVNGGDDVGLLKHGVPPPLSPETDKTTASSSNTTASSF</sequence>